<protein>
    <recommendedName>
        <fullName>Intermediate filament family orphan 2</fullName>
    </recommendedName>
</protein>
<name>IFFO2_RAT</name>
<evidence type="ECO:0000255" key="1">
    <source>
        <dbReference type="PROSITE-ProRule" id="PRU01188"/>
    </source>
</evidence>
<evidence type="ECO:0000256" key="2">
    <source>
        <dbReference type="SAM" id="MobiDB-lite"/>
    </source>
</evidence>
<proteinExistence type="inferred from homology"/>
<gene>
    <name type="primary">Iffo2</name>
</gene>
<accession>P0C6R4</accession>
<dbReference type="EMBL" id="AABR03041134">
    <property type="status" value="NOT_ANNOTATED_CDS"/>
    <property type="molecule type" value="Genomic_DNA"/>
</dbReference>
<dbReference type="EMBL" id="AABR03043923">
    <property type="status" value="NOT_ANNOTATED_CDS"/>
    <property type="molecule type" value="Genomic_DNA"/>
</dbReference>
<dbReference type="SMR" id="P0C6R4"/>
<dbReference type="FunCoup" id="P0C6R4">
    <property type="interactions" value="132"/>
</dbReference>
<dbReference type="CarbonylDB" id="P0C6R4"/>
<dbReference type="PhosphoSitePlus" id="P0C6R4"/>
<dbReference type="Ensembl" id="ENSRNOT00000101164.1">
    <property type="protein sequence ID" value="ENSRNOP00000083484.1"/>
    <property type="gene ID" value="ENSRNOG00000061876.2"/>
</dbReference>
<dbReference type="UCSC" id="RGD:1624207">
    <property type="organism name" value="rat"/>
</dbReference>
<dbReference type="AGR" id="RGD:1624207"/>
<dbReference type="RGD" id="1624207">
    <property type="gene designation" value="Iffo2"/>
</dbReference>
<dbReference type="GeneTree" id="ENSGT00940000156136"/>
<dbReference type="HOGENOM" id="CLU_039629_2_0_1"/>
<dbReference type="InParanoid" id="P0C6R4"/>
<dbReference type="PhylomeDB" id="P0C6R4"/>
<dbReference type="TreeFam" id="TF331217"/>
<dbReference type="PRO" id="PR:P0C6R4"/>
<dbReference type="Proteomes" id="UP000002494">
    <property type="component" value="Chromosome 5"/>
</dbReference>
<dbReference type="Bgee" id="ENSRNOG00000061876">
    <property type="expression patterns" value="Expressed in liver and 19 other cell types or tissues"/>
</dbReference>
<dbReference type="ExpressionAtlas" id="P0C6R4">
    <property type="expression patterns" value="baseline and differential"/>
</dbReference>
<dbReference type="GO" id="GO:0005882">
    <property type="term" value="C:intermediate filament"/>
    <property type="evidence" value="ECO:0007669"/>
    <property type="project" value="UniProtKB-KW"/>
</dbReference>
<dbReference type="Gene3D" id="1.20.5.170">
    <property type="match status" value="1"/>
</dbReference>
<dbReference type="InterPro" id="IPR039008">
    <property type="entry name" value="IF_rod_dom"/>
</dbReference>
<dbReference type="PANTHER" id="PTHR14516">
    <property type="entry name" value="1-PYRROLINE-5-CARBOXYLATE DEHYDROGENASE FAMILY MEMBER"/>
    <property type="match status" value="1"/>
</dbReference>
<dbReference type="PANTHER" id="PTHR14516:SF1">
    <property type="entry name" value="INTERMEDIATE FILAMENT FAMILY ORPHAN 2"/>
    <property type="match status" value="1"/>
</dbReference>
<dbReference type="Pfam" id="PF00038">
    <property type="entry name" value="Filament"/>
    <property type="match status" value="1"/>
</dbReference>
<dbReference type="SUPFAM" id="SSF64593">
    <property type="entry name" value="Intermediate filament protein, coiled coil region"/>
    <property type="match status" value="1"/>
</dbReference>
<dbReference type="PROSITE" id="PS51842">
    <property type="entry name" value="IF_ROD_2"/>
    <property type="match status" value="1"/>
</dbReference>
<organism>
    <name type="scientific">Rattus norvegicus</name>
    <name type="common">Rat</name>
    <dbReference type="NCBI Taxonomy" id="10116"/>
    <lineage>
        <taxon>Eukaryota</taxon>
        <taxon>Metazoa</taxon>
        <taxon>Chordata</taxon>
        <taxon>Craniata</taxon>
        <taxon>Vertebrata</taxon>
        <taxon>Euteleostomi</taxon>
        <taxon>Mammalia</taxon>
        <taxon>Eutheria</taxon>
        <taxon>Euarchontoglires</taxon>
        <taxon>Glires</taxon>
        <taxon>Rodentia</taxon>
        <taxon>Myomorpha</taxon>
        <taxon>Muroidea</taxon>
        <taxon>Muridae</taxon>
        <taxon>Murinae</taxon>
        <taxon>Rattus</taxon>
    </lineage>
</organism>
<sequence length="287" mass="33000">MNLQTMVDTLQEAAQEAEAIQEEMNEKIERLKAELVVFKGLMSDPMTDLDTKIQEKAMKVDMDICRRIDITAKLCDVAQQRNSEDVSKIFQVVPKKKDRKVASDDDISEQDGEVNRFSDEEVGSMNITDEMKRMFNQLRETFDFDDDCDSLTWEENEDTLLLWEDFTNCNPTIDLQGEQEENLGNLIHETESFFKTRDKEYQETIGQIELELATAKSDMNRHLHEYMEMCSMKRGLDVQMETCRRLIKGSADRNSPSPSSVASSDSGSTDEIQDDLEREADVEPMVS</sequence>
<keyword id="KW-0175">Coiled coil</keyword>
<keyword id="KW-0403">Intermediate filament</keyword>
<keyword id="KW-1185">Reference proteome</keyword>
<feature type="chain" id="PRO_0000326187" description="Intermediate filament family orphan 2">
    <location>
        <begin position="1"/>
        <end position="287"/>
    </location>
</feature>
<feature type="domain" description="IF rod" evidence="1">
    <location>
        <begin position="1"/>
        <end position="254"/>
    </location>
</feature>
<feature type="region of interest" description="Disordered" evidence="2">
    <location>
        <begin position="248"/>
        <end position="287"/>
    </location>
</feature>
<feature type="compositionally biased region" description="Low complexity" evidence="2">
    <location>
        <begin position="255"/>
        <end position="267"/>
    </location>
</feature>
<feature type="compositionally biased region" description="Acidic residues" evidence="2">
    <location>
        <begin position="271"/>
        <end position="287"/>
    </location>
</feature>
<comment type="similarity">
    <text evidence="1">Belongs to the intermediate filament family.</text>
</comment>
<reference key="1">
    <citation type="journal article" date="2004" name="Nature">
        <title>Genome sequence of the Brown Norway rat yields insights into mammalian evolution.</title>
        <authorList>
            <person name="Gibbs R.A."/>
            <person name="Weinstock G.M."/>
            <person name="Metzker M.L."/>
            <person name="Muzny D.M."/>
            <person name="Sodergren E.J."/>
            <person name="Scherer S."/>
            <person name="Scott G."/>
            <person name="Steffen D."/>
            <person name="Worley K.C."/>
            <person name="Burch P.E."/>
            <person name="Okwuonu G."/>
            <person name="Hines S."/>
            <person name="Lewis L."/>
            <person name="Deramo C."/>
            <person name="Delgado O."/>
            <person name="Dugan-Rocha S."/>
            <person name="Miner G."/>
            <person name="Morgan M."/>
            <person name="Hawes A."/>
            <person name="Gill R."/>
            <person name="Holt R.A."/>
            <person name="Adams M.D."/>
            <person name="Amanatides P.G."/>
            <person name="Baden-Tillson H."/>
            <person name="Barnstead M."/>
            <person name="Chin S."/>
            <person name="Evans C.A."/>
            <person name="Ferriera S."/>
            <person name="Fosler C."/>
            <person name="Glodek A."/>
            <person name="Gu Z."/>
            <person name="Jennings D."/>
            <person name="Kraft C.L."/>
            <person name="Nguyen T."/>
            <person name="Pfannkoch C.M."/>
            <person name="Sitter C."/>
            <person name="Sutton G.G."/>
            <person name="Venter J.C."/>
            <person name="Woodage T."/>
            <person name="Smith D."/>
            <person name="Lee H.-M."/>
            <person name="Gustafson E."/>
            <person name="Cahill P."/>
            <person name="Kana A."/>
            <person name="Doucette-Stamm L."/>
            <person name="Weinstock K."/>
            <person name="Fechtel K."/>
            <person name="Weiss R.B."/>
            <person name="Dunn D.M."/>
            <person name="Green E.D."/>
            <person name="Blakesley R.W."/>
            <person name="Bouffard G.G."/>
            <person name="De Jong P.J."/>
            <person name="Osoegawa K."/>
            <person name="Zhu B."/>
            <person name="Marra M."/>
            <person name="Schein J."/>
            <person name="Bosdet I."/>
            <person name="Fjell C."/>
            <person name="Jones S."/>
            <person name="Krzywinski M."/>
            <person name="Mathewson C."/>
            <person name="Siddiqui A."/>
            <person name="Wye N."/>
            <person name="McPherson J."/>
            <person name="Zhao S."/>
            <person name="Fraser C.M."/>
            <person name="Shetty J."/>
            <person name="Shatsman S."/>
            <person name="Geer K."/>
            <person name="Chen Y."/>
            <person name="Abramzon S."/>
            <person name="Nierman W.C."/>
            <person name="Havlak P.H."/>
            <person name="Chen R."/>
            <person name="Durbin K.J."/>
            <person name="Egan A."/>
            <person name="Ren Y."/>
            <person name="Song X.-Z."/>
            <person name="Li B."/>
            <person name="Liu Y."/>
            <person name="Qin X."/>
            <person name="Cawley S."/>
            <person name="Cooney A.J."/>
            <person name="D'Souza L.M."/>
            <person name="Martin K."/>
            <person name="Wu J.Q."/>
            <person name="Gonzalez-Garay M.L."/>
            <person name="Jackson A.R."/>
            <person name="Kalafus K.J."/>
            <person name="McLeod M.P."/>
            <person name="Milosavljevic A."/>
            <person name="Virk D."/>
            <person name="Volkov A."/>
            <person name="Wheeler D.A."/>
            <person name="Zhang Z."/>
            <person name="Bailey J.A."/>
            <person name="Eichler E.E."/>
            <person name="Tuzun E."/>
            <person name="Birney E."/>
            <person name="Mongin E."/>
            <person name="Ureta-Vidal A."/>
            <person name="Woodwark C."/>
            <person name="Zdobnov E."/>
            <person name="Bork P."/>
            <person name="Suyama M."/>
            <person name="Torrents D."/>
            <person name="Alexandersson M."/>
            <person name="Trask B.J."/>
            <person name="Young J.M."/>
            <person name="Huang H."/>
            <person name="Wang H."/>
            <person name="Xing H."/>
            <person name="Daniels S."/>
            <person name="Gietzen D."/>
            <person name="Schmidt J."/>
            <person name="Stevens K."/>
            <person name="Vitt U."/>
            <person name="Wingrove J."/>
            <person name="Camara F."/>
            <person name="Mar Alba M."/>
            <person name="Abril J.F."/>
            <person name="Guigo R."/>
            <person name="Smit A."/>
            <person name="Dubchak I."/>
            <person name="Rubin E.M."/>
            <person name="Couronne O."/>
            <person name="Poliakov A."/>
            <person name="Huebner N."/>
            <person name="Ganten D."/>
            <person name="Goesele C."/>
            <person name="Hummel O."/>
            <person name="Kreitler T."/>
            <person name="Lee Y.-A."/>
            <person name="Monti J."/>
            <person name="Schulz H."/>
            <person name="Zimdahl H."/>
            <person name="Himmelbauer H."/>
            <person name="Lehrach H."/>
            <person name="Jacob H.J."/>
            <person name="Bromberg S."/>
            <person name="Gullings-Handley J."/>
            <person name="Jensen-Seaman M.I."/>
            <person name="Kwitek A.E."/>
            <person name="Lazar J."/>
            <person name="Pasko D."/>
            <person name="Tonellato P.J."/>
            <person name="Twigger S."/>
            <person name="Ponting C.P."/>
            <person name="Duarte J.M."/>
            <person name="Rice S."/>
            <person name="Goodstadt L."/>
            <person name="Beatson S.A."/>
            <person name="Emes R.D."/>
            <person name="Winter E.E."/>
            <person name="Webber C."/>
            <person name="Brandt P."/>
            <person name="Nyakatura G."/>
            <person name="Adetobi M."/>
            <person name="Chiaromonte F."/>
            <person name="Elnitski L."/>
            <person name="Eswara P."/>
            <person name="Hardison R.C."/>
            <person name="Hou M."/>
            <person name="Kolbe D."/>
            <person name="Makova K."/>
            <person name="Miller W."/>
            <person name="Nekrutenko A."/>
            <person name="Riemer C."/>
            <person name="Schwartz S."/>
            <person name="Taylor J."/>
            <person name="Yang S."/>
            <person name="Zhang Y."/>
            <person name="Lindpaintner K."/>
            <person name="Andrews T.D."/>
            <person name="Caccamo M."/>
            <person name="Clamp M."/>
            <person name="Clarke L."/>
            <person name="Curwen V."/>
            <person name="Durbin R.M."/>
            <person name="Eyras E."/>
            <person name="Searle S.M."/>
            <person name="Cooper G.M."/>
            <person name="Batzoglou S."/>
            <person name="Brudno M."/>
            <person name="Sidow A."/>
            <person name="Stone E.A."/>
            <person name="Payseur B.A."/>
            <person name="Bourque G."/>
            <person name="Lopez-Otin C."/>
            <person name="Puente X.S."/>
            <person name="Chakrabarti K."/>
            <person name="Chatterji S."/>
            <person name="Dewey C."/>
            <person name="Pachter L."/>
            <person name="Bray N."/>
            <person name="Yap V.B."/>
            <person name="Caspi A."/>
            <person name="Tesler G."/>
            <person name="Pevzner P.A."/>
            <person name="Haussler D."/>
            <person name="Roskin K.M."/>
            <person name="Baertsch R."/>
            <person name="Clawson H."/>
            <person name="Furey T.S."/>
            <person name="Hinrichs A.S."/>
            <person name="Karolchik D."/>
            <person name="Kent W.J."/>
            <person name="Rosenbloom K.R."/>
            <person name="Trumbower H."/>
            <person name="Weirauch M."/>
            <person name="Cooper D.N."/>
            <person name="Stenson P.D."/>
            <person name="Ma B."/>
            <person name="Brent M."/>
            <person name="Arumugam M."/>
            <person name="Shteynberg D."/>
            <person name="Copley R.R."/>
            <person name="Taylor M.S."/>
            <person name="Riethman H."/>
            <person name="Mudunuri U."/>
            <person name="Peterson J."/>
            <person name="Guyer M."/>
            <person name="Felsenfeld A."/>
            <person name="Old S."/>
            <person name="Mockrin S."/>
            <person name="Collins F.S."/>
        </authorList>
    </citation>
    <scope>NUCLEOTIDE SEQUENCE [LARGE SCALE GENOMIC DNA]</scope>
    <source>
        <strain>Brown Norway</strain>
    </source>
</reference>